<feature type="chain" id="PRO_0000070072" description="Prostaglandin F2-alpha receptor">
    <location>
        <begin position="1"/>
        <end position="366"/>
    </location>
</feature>
<feature type="topological domain" description="Extracellular" evidence="1">
    <location>
        <begin position="1"/>
        <end position="31"/>
    </location>
</feature>
<feature type="transmembrane region" description="Helical; Name=1" evidence="1">
    <location>
        <begin position="32"/>
        <end position="55"/>
    </location>
</feature>
<feature type="topological domain" description="Cytoplasmic" evidence="1">
    <location>
        <begin position="56"/>
        <end position="69"/>
    </location>
</feature>
<feature type="transmembrane region" description="Helical; Name=2" evidence="1">
    <location>
        <begin position="70"/>
        <end position="90"/>
    </location>
</feature>
<feature type="topological domain" description="Extracellular" evidence="1">
    <location>
        <begin position="91"/>
        <end position="109"/>
    </location>
</feature>
<feature type="transmembrane region" description="Helical; Name=3" evidence="1">
    <location>
        <begin position="110"/>
        <end position="131"/>
    </location>
</feature>
<feature type="topological domain" description="Cytoplasmic" evidence="1">
    <location>
        <begin position="132"/>
        <end position="152"/>
    </location>
</feature>
<feature type="transmembrane region" description="Helical; Name=4" evidence="1">
    <location>
        <begin position="153"/>
        <end position="175"/>
    </location>
</feature>
<feature type="topological domain" description="Extracellular" evidence="1">
    <location>
        <begin position="176"/>
        <end position="198"/>
    </location>
</feature>
<feature type="transmembrane region" description="Helical; Name=5" evidence="1">
    <location>
        <begin position="199"/>
        <end position="224"/>
    </location>
</feature>
<feature type="topological domain" description="Cytoplasmic" evidence="1">
    <location>
        <begin position="225"/>
        <end position="250"/>
    </location>
</feature>
<feature type="transmembrane region" description="Helical; Name=6" evidence="1">
    <location>
        <begin position="251"/>
        <end position="267"/>
    </location>
</feature>
<feature type="topological domain" description="Extracellular" evidence="1">
    <location>
        <begin position="268"/>
        <end position="285"/>
    </location>
</feature>
<feature type="transmembrane region" description="Helical; Name=7" evidence="1">
    <location>
        <begin position="286"/>
        <end position="307"/>
    </location>
</feature>
<feature type="topological domain" description="Cytoplasmic" evidence="1">
    <location>
        <begin position="308"/>
        <end position="366"/>
    </location>
</feature>
<feature type="glycosylation site" description="N-linked (GlcNAc...) asparagine" evidence="1">
    <location>
        <position position="4"/>
    </location>
</feature>
<feature type="glycosylation site" description="N-linked (GlcNAc...) asparagine" evidence="1">
    <location>
        <position position="19"/>
    </location>
</feature>
<feature type="disulfide bond" evidence="2">
    <location>
        <begin position="108"/>
        <end position="186"/>
    </location>
</feature>
<feature type="sequence conflict" description="In Ref. 5; AAB19233." evidence="3" ref="5">
    <original>A</original>
    <variation>V</variation>
    <location>
        <position position="10"/>
    </location>
</feature>
<feature type="sequence conflict" description="In Ref. 5; AAB19233." evidence="3" ref="5">
    <original>I</original>
    <variation>M</variation>
    <location>
        <position position="113"/>
    </location>
</feature>
<organism>
    <name type="scientific">Rattus norvegicus</name>
    <name type="common">Rat</name>
    <dbReference type="NCBI Taxonomy" id="10116"/>
    <lineage>
        <taxon>Eukaryota</taxon>
        <taxon>Metazoa</taxon>
        <taxon>Chordata</taxon>
        <taxon>Craniata</taxon>
        <taxon>Vertebrata</taxon>
        <taxon>Euteleostomi</taxon>
        <taxon>Mammalia</taxon>
        <taxon>Eutheria</taxon>
        <taxon>Euarchontoglires</taxon>
        <taxon>Glires</taxon>
        <taxon>Rodentia</taxon>
        <taxon>Myomorpha</taxon>
        <taxon>Muroidea</taxon>
        <taxon>Muridae</taxon>
        <taxon>Murinae</taxon>
        <taxon>Rattus</taxon>
    </lineage>
</organism>
<reference key="1">
    <citation type="journal article" date="1994" name="Prostaglandins">
        <title>Cloning and expression of a cDNA for rat prostaglandin F2 alpha receptor.</title>
        <authorList>
            <person name="Kitanaka J."/>
            <person name="Hashimoto H."/>
            <person name="Sugimoto Y."/>
            <person name="Negishi M."/>
            <person name="Aino H."/>
            <person name="Gotoh M."/>
            <person name="Ichikawa A."/>
            <person name="Baba A."/>
        </authorList>
    </citation>
    <scope>NUCLEOTIDE SEQUENCE [MRNA]</scope>
    <source>
        <strain>Sprague-Dawley</strain>
        <tissue>Brain cortex</tissue>
    </source>
</reference>
<reference key="2">
    <citation type="journal article" date="1994" name="FEBS Lett.">
        <title>Cloning of the rat and human prostaglandin F2 alpha receptors and the expression of the rat prostaglandin F2 alpha receptor.</title>
        <authorList>
            <person name="Lake S."/>
            <person name="Gullberg H."/>
            <person name="Wahlqvist J."/>
            <person name="Sjoegren A.-M."/>
            <person name="Kinhult A."/>
            <person name="Lind P."/>
            <person name="Hellstroem-Lindahl E."/>
            <person name="Stjernschantz J."/>
        </authorList>
    </citation>
    <scope>NUCLEOTIDE SEQUENCE [MRNA]</scope>
</reference>
<reference key="3">
    <citation type="submission" date="1995-01" db="EMBL/GenBank/DDBJ databases">
        <authorList>
            <person name="de Vries C."/>
            <person name="Neuschaefer-Rube F."/>
            <person name="Haenecke K."/>
            <person name="Jungermann K."/>
            <person name="Pueschel G.P."/>
        </authorList>
    </citation>
    <scope>NUCLEOTIDE SEQUENCE [MRNA]</scope>
    <source>
        <strain>Wistar</strain>
        <tissue>Liver</tissue>
    </source>
</reference>
<reference key="4">
    <citation type="journal article" date="1996" name="Mol. Cell. Endocrinol.">
        <title>Characterization and regulation of a mRNA encoding the prostaglandin F2alpha receptor in the rat ovary.</title>
        <authorList>
            <person name="Olofsson J.I."/>
            <person name="Leung C.H.B."/>
            <person name="Bjurulf E."/>
            <person name="Ohno T."/>
            <person name="Selstam G."/>
            <person name="Peng C."/>
            <person name="Leung P.C.K."/>
        </authorList>
    </citation>
    <scope>NUCLEOTIDE SEQUENCE [MRNA]</scope>
    <source>
        <strain>Sprague-Dawley</strain>
        <tissue>Ovary</tissue>
    </source>
</reference>
<reference key="5">
    <citation type="journal article" date="1996" name="Prostaglandins Leukot. Essent. Fatty Acids">
        <title>Negative regulatory activity of a prostaglandin F2 alpha receptor associated protein (FPRP).</title>
        <authorList>
            <person name="Orlicky D.J."/>
        </authorList>
    </citation>
    <scope>NUCLEOTIDE SEQUENCE [MRNA]</scope>
    <source>
        <strain>Sprague-Dawley</strain>
        <tissue>Ovary</tissue>
    </source>
</reference>
<proteinExistence type="evidence at transcript level"/>
<gene>
    <name type="primary">Ptgfr</name>
</gene>
<dbReference type="EMBL" id="D28581">
    <property type="protein sequence ID" value="BAA05917.1"/>
    <property type="molecule type" value="mRNA"/>
</dbReference>
<dbReference type="EMBL" id="S74898">
    <property type="protein sequence ID" value="AAB32739.1"/>
    <property type="molecule type" value="mRNA"/>
</dbReference>
<dbReference type="EMBL" id="X83856">
    <property type="protein sequence ID" value="CAA58736.1"/>
    <property type="molecule type" value="mRNA"/>
</dbReference>
<dbReference type="EMBL" id="U47287">
    <property type="protein sequence ID" value="AAB47872.1"/>
    <property type="molecule type" value="mRNA"/>
</dbReference>
<dbReference type="EMBL" id="U26663">
    <property type="protein sequence ID" value="AAB19233.1"/>
    <property type="molecule type" value="mRNA"/>
</dbReference>
<dbReference type="PIR" id="S51281">
    <property type="entry name" value="S51281"/>
</dbReference>
<dbReference type="RefSeq" id="NP_037247.1">
    <property type="nucleotide sequence ID" value="NM_013115.2"/>
</dbReference>
<dbReference type="RefSeq" id="XP_006233548.1">
    <property type="nucleotide sequence ID" value="XM_006233486.5"/>
</dbReference>
<dbReference type="RefSeq" id="XP_006233549.1">
    <property type="nucleotide sequence ID" value="XM_006233487.5"/>
</dbReference>
<dbReference type="SMR" id="P43118"/>
<dbReference type="FunCoup" id="P43118">
    <property type="interactions" value="281"/>
</dbReference>
<dbReference type="STRING" id="10116.ENSRNOP00000065253"/>
<dbReference type="BindingDB" id="P43118"/>
<dbReference type="ChEMBL" id="CHEMBL4680028"/>
<dbReference type="GuidetoPHARMACOLOGY" id="344"/>
<dbReference type="GlyCosmos" id="P43118">
    <property type="glycosylation" value="2 sites, No reported glycans"/>
</dbReference>
<dbReference type="GlyGen" id="P43118">
    <property type="glycosylation" value="2 sites"/>
</dbReference>
<dbReference type="PhosphoSitePlus" id="P43118"/>
<dbReference type="PaxDb" id="10116-ENSRNOP00000065253"/>
<dbReference type="Ensembl" id="ENSRNOT00000071195.2">
    <property type="protein sequence ID" value="ENSRNOP00000065253.1"/>
    <property type="gene ID" value="ENSRNOG00000046468.2"/>
</dbReference>
<dbReference type="GeneID" id="25652"/>
<dbReference type="KEGG" id="rno:25652"/>
<dbReference type="AGR" id="RGD:3436"/>
<dbReference type="CTD" id="5737"/>
<dbReference type="RGD" id="3436">
    <property type="gene designation" value="Ptgfr"/>
</dbReference>
<dbReference type="eggNOG" id="KOG3656">
    <property type="taxonomic scope" value="Eukaryota"/>
</dbReference>
<dbReference type="GeneTree" id="ENSGT01030000234559"/>
<dbReference type="HOGENOM" id="CLU_045991_3_0_1"/>
<dbReference type="InParanoid" id="P43118"/>
<dbReference type="OMA" id="ILGHRNY"/>
<dbReference type="OrthoDB" id="5959154at2759"/>
<dbReference type="PhylomeDB" id="P43118"/>
<dbReference type="Reactome" id="R-RNO-391908">
    <property type="pathway name" value="Prostanoid ligand receptors"/>
</dbReference>
<dbReference type="Reactome" id="R-RNO-416476">
    <property type="pathway name" value="G alpha (q) signalling events"/>
</dbReference>
<dbReference type="PRO" id="PR:P43118"/>
<dbReference type="Proteomes" id="UP000002494">
    <property type="component" value="Chromosome 2"/>
</dbReference>
<dbReference type="Bgee" id="ENSRNOG00000046468">
    <property type="expression patterns" value="Expressed in heart and 14 other cell types or tissues"/>
</dbReference>
<dbReference type="GO" id="GO:0005737">
    <property type="term" value="C:cytoplasm"/>
    <property type="evidence" value="ECO:0000266"/>
    <property type="project" value="RGD"/>
</dbReference>
<dbReference type="GO" id="GO:0005576">
    <property type="term" value="C:extracellular region"/>
    <property type="evidence" value="ECO:0000266"/>
    <property type="project" value="RGD"/>
</dbReference>
<dbReference type="GO" id="GO:0005886">
    <property type="term" value="C:plasma membrane"/>
    <property type="evidence" value="ECO:0000266"/>
    <property type="project" value="RGD"/>
</dbReference>
<dbReference type="GO" id="GO:0004958">
    <property type="term" value="F:prostaglandin F receptor activity"/>
    <property type="evidence" value="ECO:0000266"/>
    <property type="project" value="RGD"/>
</dbReference>
<dbReference type="GO" id="GO:0007189">
    <property type="term" value="P:adenylate cyclase-activating G protein-coupled receptor signaling pathway"/>
    <property type="evidence" value="ECO:0000318"/>
    <property type="project" value="GO_Central"/>
</dbReference>
<dbReference type="GO" id="GO:0071799">
    <property type="term" value="P:cellular response to prostaglandin D stimulus"/>
    <property type="evidence" value="ECO:0000266"/>
    <property type="project" value="RGD"/>
</dbReference>
<dbReference type="GO" id="GO:0006954">
    <property type="term" value="P:inflammatory response"/>
    <property type="evidence" value="ECO:0000318"/>
    <property type="project" value="GO_Central"/>
</dbReference>
<dbReference type="GO" id="GO:0043066">
    <property type="term" value="P:negative regulation of apoptotic process"/>
    <property type="evidence" value="ECO:0000266"/>
    <property type="project" value="RGD"/>
</dbReference>
<dbReference type="GO" id="GO:0008284">
    <property type="term" value="P:positive regulation of cell population proliferation"/>
    <property type="evidence" value="ECO:0000266"/>
    <property type="project" value="RGD"/>
</dbReference>
<dbReference type="GO" id="GO:0007204">
    <property type="term" value="P:positive regulation of cytosolic calcium ion concentration"/>
    <property type="evidence" value="ECO:0000318"/>
    <property type="project" value="GO_Central"/>
</dbReference>
<dbReference type="GO" id="GO:0010628">
    <property type="term" value="P:positive regulation of gene expression"/>
    <property type="evidence" value="ECO:0000266"/>
    <property type="project" value="RGD"/>
</dbReference>
<dbReference type="GO" id="GO:0032355">
    <property type="term" value="P:response to estradiol"/>
    <property type="evidence" value="ECO:0000266"/>
    <property type="project" value="RGD"/>
</dbReference>
<dbReference type="GO" id="GO:0032496">
    <property type="term" value="P:response to lipopolysaccharide"/>
    <property type="evidence" value="ECO:0000266"/>
    <property type="project" value="RGD"/>
</dbReference>
<dbReference type="CDD" id="cd15145">
    <property type="entry name" value="7tmA_FP"/>
    <property type="match status" value="1"/>
</dbReference>
<dbReference type="FunFam" id="1.20.1070.10:FF:000129">
    <property type="entry name" value="Prostaglandin F2-alpha receptor"/>
    <property type="match status" value="1"/>
</dbReference>
<dbReference type="Gene3D" id="1.20.1070.10">
    <property type="entry name" value="Rhodopsin 7-helix transmembrane proteins"/>
    <property type="match status" value="1"/>
</dbReference>
<dbReference type="InterPro" id="IPR000276">
    <property type="entry name" value="GPCR_Rhodpsn"/>
</dbReference>
<dbReference type="InterPro" id="IPR017452">
    <property type="entry name" value="GPCR_Rhodpsn_7TM"/>
</dbReference>
<dbReference type="InterPro" id="IPR000141">
    <property type="entry name" value="PglndnF_rcpt"/>
</dbReference>
<dbReference type="InterPro" id="IPR008365">
    <property type="entry name" value="Prostanoid_rcpt"/>
</dbReference>
<dbReference type="PANTHER" id="PTHR11866">
    <property type="entry name" value="G-PROTEIN COUPLED RECEPTOR FAMILY 1 MEMBER"/>
    <property type="match status" value="1"/>
</dbReference>
<dbReference type="PANTHER" id="PTHR11866:SF4">
    <property type="entry name" value="PROSTAGLANDIN F2-ALPHA RECEPTOR"/>
    <property type="match status" value="1"/>
</dbReference>
<dbReference type="Pfam" id="PF00001">
    <property type="entry name" value="7tm_1"/>
    <property type="match status" value="1"/>
</dbReference>
<dbReference type="PRINTS" id="PR00237">
    <property type="entry name" value="GPCRRHODOPSN"/>
</dbReference>
<dbReference type="PRINTS" id="PR01788">
    <property type="entry name" value="PROSTANOIDR"/>
</dbReference>
<dbReference type="PRINTS" id="PR00855">
    <property type="entry name" value="PRSTNOIDFPR"/>
</dbReference>
<dbReference type="SUPFAM" id="SSF81321">
    <property type="entry name" value="Family A G protein-coupled receptor-like"/>
    <property type="match status" value="1"/>
</dbReference>
<dbReference type="PROSITE" id="PS00237">
    <property type="entry name" value="G_PROTEIN_RECEP_F1_1"/>
    <property type="match status" value="1"/>
</dbReference>
<dbReference type="PROSITE" id="PS50262">
    <property type="entry name" value="G_PROTEIN_RECEP_F1_2"/>
    <property type="match status" value="1"/>
</dbReference>
<keyword id="KW-1003">Cell membrane</keyword>
<keyword id="KW-1015">Disulfide bond</keyword>
<keyword id="KW-0297">G-protein coupled receptor</keyword>
<keyword id="KW-0325">Glycoprotein</keyword>
<keyword id="KW-0472">Membrane</keyword>
<keyword id="KW-0675">Receptor</keyword>
<keyword id="KW-1185">Reference proteome</keyword>
<keyword id="KW-0807">Transducer</keyword>
<keyword id="KW-0812">Transmembrane</keyword>
<keyword id="KW-1133">Transmembrane helix</keyword>
<accession>P43118</accession>
<accession>Q62787</accession>
<comment type="function">
    <text>Receptor for prostaglandin F2-alpha (PGF2-alpha). The activity of this receptor is mediated by G proteins which activate a phosphatidylinositol-calcium second messenger system. Initiates luteolysis in the corpus luteum.</text>
</comment>
<comment type="subcellular location">
    <subcellularLocation>
        <location>Cell membrane</location>
        <topology>Multi-pass membrane protein</topology>
    </subcellularLocation>
</comment>
<comment type="tissue specificity">
    <text>Highest expression in pregnant ovary. Also found in a low extent in the kidney. In the brain, expressed in astrocytes and oligodendrocytes, and meningeal fibroblasts, but not in migroglia cells.</text>
</comment>
<comment type="similarity">
    <text evidence="2">Belongs to the G-protein coupled receptor 1 family.</text>
</comment>
<protein>
    <recommendedName>
        <fullName>Prostaglandin F2-alpha receptor</fullName>
        <shortName>PGF receptor</shortName>
        <shortName>PGF2-alpha receptor</shortName>
    </recommendedName>
    <alternativeName>
        <fullName>Prostanoid FP receptor</fullName>
    </alternativeName>
</protein>
<sequence>MSINSSKQPASSAAGLIANTTCQTENRLSVFFSIIFMTVGIVSNSLAIAILMKAYQRFRRKSKASFLLLASGLVITDFFGHLINGGIAVFVYASDKDWIRFDQSNILCSVFGISMVFSGLCPLFLGSTMAIERCIGVTNPLFHSTKITSKHVKMILSGVCMFAVFVALLPILGHRDYQIQASRTWCFYNTEHIEDWEDRFYLLFFSSLGLLALGISFSCNAVTGVTLLRVKFRSQQHRQGRSHHLEMVIQLLAIMCVSCVCWSPFLVTMANIAINGNNSPVTCETTLFALRMATWNQILDPWVYILLRKAVLRNLYKLASRCCGVNIISLHIWELSSIKNSLKVAAISESPAAEKENQQASSEAGL</sequence>
<name>PF2R_RAT</name>
<evidence type="ECO:0000255" key="1"/>
<evidence type="ECO:0000255" key="2">
    <source>
        <dbReference type="PROSITE-ProRule" id="PRU00521"/>
    </source>
</evidence>
<evidence type="ECO:0000305" key="3"/>